<dbReference type="EC" id="2.7.8.13" evidence="1"/>
<dbReference type="EMBL" id="CP001161">
    <property type="protein sequence ID" value="ACL30588.1"/>
    <property type="molecule type" value="Genomic_DNA"/>
</dbReference>
<dbReference type="RefSeq" id="WP_009874176.1">
    <property type="nucleotide sequence ID" value="NC_011833.1"/>
</dbReference>
<dbReference type="SMR" id="B8D917"/>
<dbReference type="KEGG" id="bap:BUAP5A_215"/>
<dbReference type="HOGENOM" id="CLU_023982_0_0_6"/>
<dbReference type="OrthoDB" id="9805475at2"/>
<dbReference type="UniPathway" id="UPA00219"/>
<dbReference type="Proteomes" id="UP000006904">
    <property type="component" value="Chromosome"/>
</dbReference>
<dbReference type="GO" id="GO:0005886">
    <property type="term" value="C:plasma membrane"/>
    <property type="evidence" value="ECO:0007669"/>
    <property type="project" value="UniProtKB-SubCell"/>
</dbReference>
<dbReference type="GO" id="GO:0046872">
    <property type="term" value="F:metal ion binding"/>
    <property type="evidence" value="ECO:0007669"/>
    <property type="project" value="UniProtKB-KW"/>
</dbReference>
<dbReference type="GO" id="GO:0008963">
    <property type="term" value="F:phospho-N-acetylmuramoyl-pentapeptide-transferase activity"/>
    <property type="evidence" value="ECO:0007669"/>
    <property type="project" value="UniProtKB-UniRule"/>
</dbReference>
<dbReference type="GO" id="GO:0051992">
    <property type="term" value="F:UDP-N-acetylmuramoyl-L-alanyl-D-glutamyl-meso-2,6-diaminopimelyl-D-alanyl-D-alanine:undecaprenyl-phosphate transferase activity"/>
    <property type="evidence" value="ECO:0007669"/>
    <property type="project" value="RHEA"/>
</dbReference>
<dbReference type="GO" id="GO:0051301">
    <property type="term" value="P:cell division"/>
    <property type="evidence" value="ECO:0007669"/>
    <property type="project" value="UniProtKB-KW"/>
</dbReference>
<dbReference type="GO" id="GO:0071555">
    <property type="term" value="P:cell wall organization"/>
    <property type="evidence" value="ECO:0007669"/>
    <property type="project" value="UniProtKB-KW"/>
</dbReference>
<dbReference type="GO" id="GO:0009252">
    <property type="term" value="P:peptidoglycan biosynthetic process"/>
    <property type="evidence" value="ECO:0007669"/>
    <property type="project" value="UniProtKB-UniRule"/>
</dbReference>
<dbReference type="GO" id="GO:0008360">
    <property type="term" value="P:regulation of cell shape"/>
    <property type="evidence" value="ECO:0007669"/>
    <property type="project" value="UniProtKB-KW"/>
</dbReference>
<dbReference type="CDD" id="cd06852">
    <property type="entry name" value="GT_MraY"/>
    <property type="match status" value="1"/>
</dbReference>
<dbReference type="HAMAP" id="MF_00038">
    <property type="entry name" value="MraY"/>
    <property type="match status" value="1"/>
</dbReference>
<dbReference type="InterPro" id="IPR000715">
    <property type="entry name" value="Glycosyl_transferase_4"/>
</dbReference>
<dbReference type="InterPro" id="IPR003524">
    <property type="entry name" value="PNAcMuramoyl-5peptid_Trfase"/>
</dbReference>
<dbReference type="InterPro" id="IPR018480">
    <property type="entry name" value="PNAcMuramoyl-5peptid_Trfase_CS"/>
</dbReference>
<dbReference type="NCBIfam" id="TIGR00445">
    <property type="entry name" value="mraY"/>
    <property type="match status" value="1"/>
</dbReference>
<dbReference type="PANTHER" id="PTHR22926">
    <property type="entry name" value="PHOSPHO-N-ACETYLMURAMOYL-PENTAPEPTIDE-TRANSFERASE"/>
    <property type="match status" value="1"/>
</dbReference>
<dbReference type="PANTHER" id="PTHR22926:SF5">
    <property type="entry name" value="PHOSPHO-N-ACETYLMURAMOYL-PENTAPEPTIDE-TRANSFERASE HOMOLOG"/>
    <property type="match status" value="1"/>
</dbReference>
<dbReference type="Pfam" id="PF00953">
    <property type="entry name" value="Glycos_transf_4"/>
    <property type="match status" value="1"/>
</dbReference>
<dbReference type="Pfam" id="PF10555">
    <property type="entry name" value="MraY_sig1"/>
    <property type="match status" value="1"/>
</dbReference>
<dbReference type="PROSITE" id="PS01347">
    <property type="entry name" value="MRAY_1"/>
    <property type="match status" value="1"/>
</dbReference>
<dbReference type="PROSITE" id="PS01348">
    <property type="entry name" value="MRAY_2"/>
    <property type="match status" value="1"/>
</dbReference>
<gene>
    <name evidence="1" type="primary">mraY</name>
    <name type="ordered locus">BUAP5A_215</name>
</gene>
<feature type="chain" id="PRO_1000117168" description="Phospho-N-acetylmuramoyl-pentapeptide-transferase">
    <location>
        <begin position="1"/>
        <end position="357"/>
    </location>
</feature>
<feature type="transmembrane region" description="Helical" evidence="1">
    <location>
        <begin position="23"/>
        <end position="43"/>
    </location>
</feature>
<feature type="transmembrane region" description="Helical" evidence="1">
    <location>
        <begin position="70"/>
        <end position="90"/>
    </location>
</feature>
<feature type="transmembrane region" description="Helical" evidence="1">
    <location>
        <begin position="91"/>
        <end position="111"/>
    </location>
</feature>
<feature type="transmembrane region" description="Helical" evidence="1">
    <location>
        <begin position="127"/>
        <end position="147"/>
    </location>
</feature>
<feature type="transmembrane region" description="Helical" evidence="1">
    <location>
        <begin position="171"/>
        <end position="191"/>
    </location>
</feature>
<feature type="transmembrane region" description="Helical" evidence="1">
    <location>
        <begin position="196"/>
        <end position="216"/>
    </location>
</feature>
<feature type="transmembrane region" description="Helical" evidence="1">
    <location>
        <begin position="236"/>
        <end position="256"/>
    </location>
</feature>
<feature type="transmembrane region" description="Helical" evidence="1">
    <location>
        <begin position="260"/>
        <end position="280"/>
    </location>
</feature>
<feature type="transmembrane region" description="Helical" evidence="1">
    <location>
        <begin position="286"/>
        <end position="306"/>
    </location>
</feature>
<feature type="transmembrane region" description="Helical" evidence="1">
    <location>
        <begin position="334"/>
        <end position="354"/>
    </location>
</feature>
<name>MRAY_BUCA5</name>
<evidence type="ECO:0000255" key="1">
    <source>
        <dbReference type="HAMAP-Rule" id="MF_00038"/>
    </source>
</evidence>
<keyword id="KW-0131">Cell cycle</keyword>
<keyword id="KW-0132">Cell division</keyword>
<keyword id="KW-0997">Cell inner membrane</keyword>
<keyword id="KW-1003">Cell membrane</keyword>
<keyword id="KW-0133">Cell shape</keyword>
<keyword id="KW-0961">Cell wall biogenesis/degradation</keyword>
<keyword id="KW-0460">Magnesium</keyword>
<keyword id="KW-0472">Membrane</keyword>
<keyword id="KW-0479">Metal-binding</keyword>
<keyword id="KW-0573">Peptidoglycan synthesis</keyword>
<keyword id="KW-0808">Transferase</keyword>
<keyword id="KW-0812">Transmembrane</keyword>
<keyword id="KW-1133">Transmembrane helix</keyword>
<comment type="function">
    <text evidence="1">Catalyzes the initial step of the lipid cycle reactions in the biosynthesis of the cell wall peptidoglycan: transfers peptidoglycan precursor phospho-MurNAc-pentapeptide from UDP-MurNAc-pentapeptide onto the lipid carrier undecaprenyl phosphate, yielding undecaprenyl-pyrophosphoryl-MurNAc-pentapeptide, known as lipid I.</text>
</comment>
<comment type="catalytic activity">
    <reaction evidence="1">
        <text>UDP-N-acetyl-alpha-D-muramoyl-L-alanyl-gamma-D-glutamyl-meso-2,6-diaminopimeloyl-D-alanyl-D-alanine + di-trans,octa-cis-undecaprenyl phosphate = di-trans,octa-cis-undecaprenyl diphospho-N-acetyl-alpha-D-muramoyl-L-alanyl-D-glutamyl-meso-2,6-diaminopimeloyl-D-alanyl-D-alanine + UMP</text>
        <dbReference type="Rhea" id="RHEA:28386"/>
        <dbReference type="ChEBI" id="CHEBI:57865"/>
        <dbReference type="ChEBI" id="CHEBI:60392"/>
        <dbReference type="ChEBI" id="CHEBI:61386"/>
        <dbReference type="ChEBI" id="CHEBI:61387"/>
        <dbReference type="EC" id="2.7.8.13"/>
    </reaction>
</comment>
<comment type="cofactor">
    <cofactor evidence="1">
        <name>Mg(2+)</name>
        <dbReference type="ChEBI" id="CHEBI:18420"/>
    </cofactor>
</comment>
<comment type="pathway">
    <text evidence="1">Cell wall biogenesis; peptidoglycan biosynthesis.</text>
</comment>
<comment type="subcellular location">
    <subcellularLocation>
        <location evidence="1">Cell inner membrane</location>
        <topology evidence="1">Multi-pass membrane protein</topology>
    </subcellularLocation>
</comment>
<comment type="similarity">
    <text evidence="1">Belongs to the glycosyltransferase 4 family. MraY subfamily.</text>
</comment>
<reference key="1">
    <citation type="journal article" date="2009" name="Science">
        <title>The dynamics and time scale of ongoing genomic erosion in symbiotic bacteria.</title>
        <authorList>
            <person name="Moran N.A."/>
            <person name="McLaughlin H.J."/>
            <person name="Sorek R."/>
        </authorList>
    </citation>
    <scope>NUCLEOTIDE SEQUENCE [LARGE SCALE GENOMIC DNA]</scope>
    <source>
        <strain>5A</strain>
    </source>
</reference>
<sequence length="357" mass="40970">MLIFFNKYLHINLNILSYIPYRAIFSLLTSFFINLYIGPYFIYYFKKLQTYQIIRNNGPKTHYSKKNTPTMGGIFIIFSILFSTILYCNLSNIYIWYVISILIGYGLIGFIDDYKKIKYKNSQGLKLKWKYFFLSIIAFIFICMIKINNKDIISTELIIPFCIKNDFEINYLYIFLSYFVLVGTSNAVNLTDGLDGLAIMPVIFLTCGLTLISLFSDNINISHYLHVHYVKNSTELAILCMAIVGSGLGFLWFNSYPAKVFMGDVGSLALGGSLGAIAILLHQELLLIIMGGIFVFETISVILQIISFKIRKKRIFQMAPVHHHYEVKGILEPLIIVRFWIVSLILLLISLISLKVC</sequence>
<accession>B8D917</accession>
<organism>
    <name type="scientific">Buchnera aphidicola subsp. Acyrthosiphon pisum (strain 5A)</name>
    <dbReference type="NCBI Taxonomy" id="563178"/>
    <lineage>
        <taxon>Bacteria</taxon>
        <taxon>Pseudomonadati</taxon>
        <taxon>Pseudomonadota</taxon>
        <taxon>Gammaproteobacteria</taxon>
        <taxon>Enterobacterales</taxon>
        <taxon>Erwiniaceae</taxon>
        <taxon>Buchnera</taxon>
    </lineage>
</organism>
<protein>
    <recommendedName>
        <fullName evidence="1">Phospho-N-acetylmuramoyl-pentapeptide-transferase</fullName>
        <ecNumber evidence="1">2.7.8.13</ecNumber>
    </recommendedName>
    <alternativeName>
        <fullName evidence="1">UDP-MurNAc-pentapeptide phosphotransferase</fullName>
    </alternativeName>
</protein>
<proteinExistence type="inferred from homology"/>